<organism>
    <name type="scientific">Mycobacterium bovis (strain BCG / Pasteur 1173P2)</name>
    <dbReference type="NCBI Taxonomy" id="410289"/>
    <lineage>
        <taxon>Bacteria</taxon>
        <taxon>Bacillati</taxon>
        <taxon>Actinomycetota</taxon>
        <taxon>Actinomycetes</taxon>
        <taxon>Mycobacteriales</taxon>
        <taxon>Mycobacteriaceae</taxon>
        <taxon>Mycobacterium</taxon>
        <taxon>Mycobacterium tuberculosis complex</taxon>
    </lineage>
</organism>
<proteinExistence type="inferred from homology"/>
<evidence type="ECO:0000255" key="1">
    <source>
        <dbReference type="HAMAP-Rule" id="MF_01020"/>
    </source>
</evidence>
<reference key="1">
    <citation type="journal article" date="2007" name="Proc. Natl. Acad. Sci. U.S.A.">
        <title>Genome plasticity of BCG and impact on vaccine efficacy.</title>
        <authorList>
            <person name="Brosch R."/>
            <person name="Gordon S.V."/>
            <person name="Garnier T."/>
            <person name="Eiglmeier K."/>
            <person name="Frigui W."/>
            <person name="Valenti P."/>
            <person name="Dos Santos S."/>
            <person name="Duthoy S."/>
            <person name="Lacroix C."/>
            <person name="Garcia-Pelayo C."/>
            <person name="Inwald J.K."/>
            <person name="Golby P."/>
            <person name="Garcia J.N."/>
            <person name="Hewinson R.G."/>
            <person name="Behr M.A."/>
            <person name="Quail M.A."/>
            <person name="Churcher C."/>
            <person name="Barrell B.G."/>
            <person name="Parkhill J."/>
            <person name="Cole S.T."/>
        </authorList>
    </citation>
    <scope>NUCLEOTIDE SEQUENCE [LARGE SCALE GENOMIC DNA]</scope>
    <source>
        <strain>BCG / Pasteur 1173P2</strain>
    </source>
</reference>
<keyword id="KW-0028">Amino-acid biosynthesis</keyword>
<keyword id="KW-0067">ATP-binding</keyword>
<keyword id="KW-0963">Cytoplasm</keyword>
<keyword id="KW-0368">Histidine biosynthesis</keyword>
<keyword id="KW-0378">Hydrolase</keyword>
<keyword id="KW-0547">Nucleotide-binding</keyword>
<name>HIS2_MYCBP</name>
<dbReference type="EC" id="3.6.1.31" evidence="1"/>
<dbReference type="EMBL" id="AM408590">
    <property type="protein sequence ID" value="CAL72127.1"/>
    <property type="molecule type" value="Genomic_DNA"/>
</dbReference>
<dbReference type="RefSeq" id="WP_003899180.1">
    <property type="nucleotide sequence ID" value="NC_008769.1"/>
</dbReference>
<dbReference type="SMR" id="A1KKG5"/>
<dbReference type="KEGG" id="mbb:BCG_2139c"/>
<dbReference type="HOGENOM" id="CLU_123337_2_1_11"/>
<dbReference type="UniPathway" id="UPA00031">
    <property type="reaction ID" value="UER00007"/>
</dbReference>
<dbReference type="Proteomes" id="UP000001472">
    <property type="component" value="Chromosome"/>
</dbReference>
<dbReference type="GO" id="GO:0005737">
    <property type="term" value="C:cytoplasm"/>
    <property type="evidence" value="ECO:0007669"/>
    <property type="project" value="UniProtKB-SubCell"/>
</dbReference>
<dbReference type="GO" id="GO:0005524">
    <property type="term" value="F:ATP binding"/>
    <property type="evidence" value="ECO:0007669"/>
    <property type="project" value="UniProtKB-KW"/>
</dbReference>
<dbReference type="GO" id="GO:0004636">
    <property type="term" value="F:phosphoribosyl-ATP diphosphatase activity"/>
    <property type="evidence" value="ECO:0007669"/>
    <property type="project" value="UniProtKB-UniRule"/>
</dbReference>
<dbReference type="GO" id="GO:0000105">
    <property type="term" value="P:L-histidine biosynthetic process"/>
    <property type="evidence" value="ECO:0007669"/>
    <property type="project" value="UniProtKB-UniRule"/>
</dbReference>
<dbReference type="CDD" id="cd11547">
    <property type="entry name" value="NTP-PPase_HisE"/>
    <property type="match status" value="1"/>
</dbReference>
<dbReference type="FunFam" id="1.10.287.1080:FF:000005">
    <property type="entry name" value="Phosphoribosyl-ATP pyrophosphatase"/>
    <property type="match status" value="1"/>
</dbReference>
<dbReference type="Gene3D" id="1.10.287.1080">
    <property type="entry name" value="MazG-like"/>
    <property type="match status" value="1"/>
</dbReference>
<dbReference type="HAMAP" id="MF_01020">
    <property type="entry name" value="HisE"/>
    <property type="match status" value="1"/>
</dbReference>
<dbReference type="InterPro" id="IPR008179">
    <property type="entry name" value="HisE"/>
</dbReference>
<dbReference type="InterPro" id="IPR021130">
    <property type="entry name" value="PRib-ATP_PPHydrolase-like"/>
</dbReference>
<dbReference type="NCBIfam" id="TIGR03188">
    <property type="entry name" value="histidine_hisI"/>
    <property type="match status" value="1"/>
</dbReference>
<dbReference type="NCBIfam" id="NF001610">
    <property type="entry name" value="PRK00400.1-1"/>
    <property type="match status" value="1"/>
</dbReference>
<dbReference type="PANTHER" id="PTHR42945">
    <property type="entry name" value="HISTIDINE BIOSYNTHESIS BIFUNCTIONAL PROTEIN"/>
    <property type="match status" value="1"/>
</dbReference>
<dbReference type="PANTHER" id="PTHR42945:SF1">
    <property type="entry name" value="HISTIDINE BIOSYNTHESIS BIFUNCTIONAL PROTEIN HIS7"/>
    <property type="match status" value="1"/>
</dbReference>
<dbReference type="Pfam" id="PF01503">
    <property type="entry name" value="PRA-PH"/>
    <property type="match status" value="1"/>
</dbReference>
<dbReference type="SUPFAM" id="SSF101386">
    <property type="entry name" value="all-alpha NTP pyrophosphatases"/>
    <property type="match status" value="1"/>
</dbReference>
<accession>A1KKG5</accession>
<sequence length="93" mass="10275">MQQSLAVKTFEDLFAELGDRARTRPADSTTVAALDGGVHALGKKLLEEAGEVWLAAEHESNDALAEEISQLLYWTQVLMISRGLSLDDVYRKL</sequence>
<comment type="catalytic activity">
    <reaction evidence="1">
        <text>1-(5-phospho-beta-D-ribosyl)-ATP + H2O = 1-(5-phospho-beta-D-ribosyl)-5'-AMP + diphosphate + H(+)</text>
        <dbReference type="Rhea" id="RHEA:22828"/>
        <dbReference type="ChEBI" id="CHEBI:15377"/>
        <dbReference type="ChEBI" id="CHEBI:15378"/>
        <dbReference type="ChEBI" id="CHEBI:33019"/>
        <dbReference type="ChEBI" id="CHEBI:59457"/>
        <dbReference type="ChEBI" id="CHEBI:73183"/>
        <dbReference type="EC" id="3.6.1.31"/>
    </reaction>
</comment>
<comment type="pathway">
    <text evidence="1">Amino-acid biosynthesis; L-histidine biosynthesis; L-histidine from 5-phospho-alpha-D-ribose 1-diphosphate: step 2/9.</text>
</comment>
<comment type="subcellular location">
    <subcellularLocation>
        <location evidence="1">Cytoplasm</location>
    </subcellularLocation>
</comment>
<comment type="similarity">
    <text evidence="1">Belongs to the PRA-PH family.</text>
</comment>
<feature type="chain" id="PRO_1000063355" description="Phosphoribosyl-ATP pyrophosphatase">
    <location>
        <begin position="1"/>
        <end position="93"/>
    </location>
</feature>
<protein>
    <recommendedName>
        <fullName evidence="1">Phosphoribosyl-ATP pyrophosphatase</fullName>
        <shortName evidence="1">PRA-PH</shortName>
        <ecNumber evidence="1">3.6.1.31</ecNumber>
    </recommendedName>
</protein>
<gene>
    <name evidence="1" type="primary">hisE</name>
    <name type="ordered locus">BCG_2139c</name>
</gene>